<evidence type="ECO:0000255" key="1">
    <source>
        <dbReference type="HAMAP-Rule" id="MF_00380"/>
    </source>
</evidence>
<evidence type="ECO:0000256" key="2">
    <source>
        <dbReference type="SAM" id="MobiDB-lite"/>
    </source>
</evidence>
<comment type="function">
    <text evidence="1">This protein is one of the two subunits of integration host factor, a specific DNA-binding protein that functions in genetic recombination as well as in transcriptional and translational control.</text>
</comment>
<comment type="subunit">
    <text evidence="1">Heterodimer of an alpha and a beta chain.</text>
</comment>
<comment type="similarity">
    <text evidence="1">Belongs to the bacterial histone-like protein family.</text>
</comment>
<feature type="chain" id="PRO_1000060541" description="Integration host factor subunit alpha">
    <location>
        <begin position="1"/>
        <end position="99"/>
    </location>
</feature>
<feature type="region of interest" description="Disordered" evidence="2">
    <location>
        <begin position="49"/>
        <end position="72"/>
    </location>
</feature>
<gene>
    <name evidence="1" type="primary">ihfA</name>
    <name evidence="1" type="synonym">himA</name>
    <name type="ordered locus">EcHS_A1792</name>
</gene>
<proteinExistence type="inferred from homology"/>
<sequence length="99" mass="11384">MTLTKAEMSEYLFDKLGLSKRDAKELVELFFEEIRRALENGEQVKLSGFGNFDLRDKNQRPGRNPKTGEDIPITARRVVTFRPGQKLKSRVENASPKDE</sequence>
<accession>A8A0Q4</accession>
<protein>
    <recommendedName>
        <fullName evidence="1">Integration host factor subunit alpha</fullName>
        <shortName evidence="1">IHF-alpha</shortName>
    </recommendedName>
</protein>
<dbReference type="EMBL" id="CP000802">
    <property type="protein sequence ID" value="ABV06108.1"/>
    <property type="molecule type" value="Genomic_DNA"/>
</dbReference>
<dbReference type="RefSeq" id="WP_000176417.1">
    <property type="nucleotide sequence ID" value="NC_009800.1"/>
</dbReference>
<dbReference type="SMR" id="A8A0Q4"/>
<dbReference type="KEGG" id="ecx:EcHS_A1792"/>
<dbReference type="HOGENOM" id="CLU_105066_1_3_6"/>
<dbReference type="GO" id="GO:0005829">
    <property type="term" value="C:cytosol"/>
    <property type="evidence" value="ECO:0007669"/>
    <property type="project" value="TreeGrafter"/>
</dbReference>
<dbReference type="GO" id="GO:0003677">
    <property type="term" value="F:DNA binding"/>
    <property type="evidence" value="ECO:0007669"/>
    <property type="project" value="UniProtKB-UniRule"/>
</dbReference>
<dbReference type="GO" id="GO:0030527">
    <property type="term" value="F:structural constituent of chromatin"/>
    <property type="evidence" value="ECO:0007669"/>
    <property type="project" value="InterPro"/>
</dbReference>
<dbReference type="GO" id="GO:0006310">
    <property type="term" value="P:DNA recombination"/>
    <property type="evidence" value="ECO:0007669"/>
    <property type="project" value="UniProtKB-UniRule"/>
</dbReference>
<dbReference type="GO" id="GO:0009893">
    <property type="term" value="P:positive regulation of metabolic process"/>
    <property type="evidence" value="ECO:0007669"/>
    <property type="project" value="UniProtKB-ARBA"/>
</dbReference>
<dbReference type="GO" id="GO:0006355">
    <property type="term" value="P:regulation of DNA-templated transcription"/>
    <property type="evidence" value="ECO:0007669"/>
    <property type="project" value="UniProtKB-UniRule"/>
</dbReference>
<dbReference type="GO" id="GO:0006417">
    <property type="term" value="P:regulation of translation"/>
    <property type="evidence" value="ECO:0007669"/>
    <property type="project" value="UniProtKB-UniRule"/>
</dbReference>
<dbReference type="CDD" id="cd13835">
    <property type="entry name" value="IHF_A"/>
    <property type="match status" value="1"/>
</dbReference>
<dbReference type="FunFam" id="4.10.520.10:FF:000002">
    <property type="entry name" value="Integration host factor subunit alpha"/>
    <property type="match status" value="1"/>
</dbReference>
<dbReference type="Gene3D" id="4.10.520.10">
    <property type="entry name" value="IHF-like DNA-binding proteins"/>
    <property type="match status" value="1"/>
</dbReference>
<dbReference type="HAMAP" id="MF_00380">
    <property type="entry name" value="IHF_alpha"/>
    <property type="match status" value="1"/>
</dbReference>
<dbReference type="InterPro" id="IPR000119">
    <property type="entry name" value="Hist_DNA-bd"/>
</dbReference>
<dbReference type="InterPro" id="IPR020816">
    <property type="entry name" value="Histone-like_DNA-bd_CS"/>
</dbReference>
<dbReference type="InterPro" id="IPR010992">
    <property type="entry name" value="IHF-like_DNA-bd_dom_sf"/>
</dbReference>
<dbReference type="InterPro" id="IPR005684">
    <property type="entry name" value="IHF_alpha"/>
</dbReference>
<dbReference type="NCBIfam" id="TIGR00987">
    <property type="entry name" value="himA"/>
    <property type="match status" value="1"/>
</dbReference>
<dbReference type="NCBIfam" id="NF001401">
    <property type="entry name" value="PRK00285.1"/>
    <property type="match status" value="1"/>
</dbReference>
<dbReference type="PANTHER" id="PTHR33175">
    <property type="entry name" value="DNA-BINDING PROTEIN HU"/>
    <property type="match status" value="1"/>
</dbReference>
<dbReference type="PANTHER" id="PTHR33175:SF2">
    <property type="entry name" value="INTEGRATION HOST FACTOR SUBUNIT ALPHA"/>
    <property type="match status" value="1"/>
</dbReference>
<dbReference type="Pfam" id="PF00216">
    <property type="entry name" value="Bac_DNA_binding"/>
    <property type="match status" value="1"/>
</dbReference>
<dbReference type="PRINTS" id="PR01727">
    <property type="entry name" value="DNABINDINGHU"/>
</dbReference>
<dbReference type="SMART" id="SM00411">
    <property type="entry name" value="BHL"/>
    <property type="match status" value="1"/>
</dbReference>
<dbReference type="SUPFAM" id="SSF47729">
    <property type="entry name" value="IHF-like DNA-binding proteins"/>
    <property type="match status" value="1"/>
</dbReference>
<dbReference type="PROSITE" id="PS00045">
    <property type="entry name" value="HISTONE_LIKE"/>
    <property type="match status" value="1"/>
</dbReference>
<name>IHFA_ECOHS</name>
<reference key="1">
    <citation type="journal article" date="2008" name="J. Bacteriol.">
        <title>The pangenome structure of Escherichia coli: comparative genomic analysis of E. coli commensal and pathogenic isolates.</title>
        <authorList>
            <person name="Rasko D.A."/>
            <person name="Rosovitz M.J."/>
            <person name="Myers G.S.A."/>
            <person name="Mongodin E.F."/>
            <person name="Fricke W.F."/>
            <person name="Gajer P."/>
            <person name="Crabtree J."/>
            <person name="Sebaihia M."/>
            <person name="Thomson N.R."/>
            <person name="Chaudhuri R."/>
            <person name="Henderson I.R."/>
            <person name="Sperandio V."/>
            <person name="Ravel J."/>
        </authorList>
    </citation>
    <scope>NUCLEOTIDE SEQUENCE [LARGE SCALE GENOMIC DNA]</scope>
    <source>
        <strain>HS</strain>
    </source>
</reference>
<keyword id="KW-0233">DNA recombination</keyword>
<keyword id="KW-0238">DNA-binding</keyword>
<keyword id="KW-0804">Transcription</keyword>
<keyword id="KW-0805">Transcription regulation</keyword>
<keyword id="KW-0810">Translation regulation</keyword>
<organism>
    <name type="scientific">Escherichia coli O9:H4 (strain HS)</name>
    <dbReference type="NCBI Taxonomy" id="331112"/>
    <lineage>
        <taxon>Bacteria</taxon>
        <taxon>Pseudomonadati</taxon>
        <taxon>Pseudomonadota</taxon>
        <taxon>Gammaproteobacteria</taxon>
        <taxon>Enterobacterales</taxon>
        <taxon>Enterobacteriaceae</taxon>
        <taxon>Escherichia</taxon>
    </lineage>
</organism>